<proteinExistence type="evidence at protein level"/>
<feature type="initiator methionine" description="Removed" evidence="8">
    <location>
        <position position="1"/>
    </location>
</feature>
<feature type="chain" id="PRO_0000240396" description="Ras association domain-containing protein 3">
    <location>
        <begin position="2"/>
        <end position="238"/>
    </location>
</feature>
<feature type="domain" description="Ras-associating" evidence="1">
    <location>
        <begin position="79"/>
        <end position="186"/>
    </location>
</feature>
<feature type="domain" description="SARAH" evidence="2">
    <location>
        <begin position="187"/>
        <end position="234"/>
    </location>
</feature>
<feature type="region of interest" description="Disordered" evidence="3">
    <location>
        <begin position="26"/>
        <end position="48"/>
    </location>
</feature>
<feature type="compositionally biased region" description="Basic and acidic residues" evidence="3">
    <location>
        <begin position="38"/>
        <end position="48"/>
    </location>
</feature>
<feature type="modified residue" description="N-acetylserine" evidence="8">
    <location>
        <position position="2"/>
    </location>
</feature>
<feature type="splice variant" id="VSP_019353" description="In isoform 2." evidence="6">
    <original>NSNGIYTGFIKVQMELC</original>
    <variation>STPASSQTGNIHSTCVW</variation>
    <location>
        <begin position="74"/>
        <end position="90"/>
    </location>
</feature>
<feature type="splice variant" id="VSP_019354" description="In isoform 2." evidence="6">
    <location>
        <begin position="91"/>
        <end position="238"/>
    </location>
</feature>
<feature type="sequence variant" id="VAR_026724" description="In dbSNP:rs74098110." evidence="4">
    <original>R</original>
    <variation>H</variation>
    <location>
        <position position="232"/>
    </location>
</feature>
<accession>Q86WH2</accession>
<accession>Q86WH1</accession>
<gene>
    <name type="primary">RASSF3</name>
</gene>
<name>RASF3_HUMAN</name>
<organism>
    <name type="scientific">Homo sapiens</name>
    <name type="common">Human</name>
    <dbReference type="NCBI Taxonomy" id="9606"/>
    <lineage>
        <taxon>Eukaryota</taxon>
        <taxon>Metazoa</taxon>
        <taxon>Chordata</taxon>
        <taxon>Craniata</taxon>
        <taxon>Vertebrata</taxon>
        <taxon>Euteleostomi</taxon>
        <taxon>Mammalia</taxon>
        <taxon>Eutheria</taxon>
        <taxon>Euarchontoglires</taxon>
        <taxon>Primates</taxon>
        <taxon>Haplorrhini</taxon>
        <taxon>Catarrhini</taxon>
        <taxon>Hominidae</taxon>
        <taxon>Homo</taxon>
    </lineage>
</organism>
<dbReference type="EMBL" id="AY217662">
    <property type="protein sequence ID" value="AAO61687.1"/>
    <property type="molecule type" value="mRNA"/>
</dbReference>
<dbReference type="EMBL" id="AY217663">
    <property type="protein sequence ID" value="AAO61688.1"/>
    <property type="molecule type" value="mRNA"/>
</dbReference>
<dbReference type="EMBL" id="BC100951">
    <property type="protein sequence ID" value="AAI00952.1"/>
    <property type="molecule type" value="mRNA"/>
</dbReference>
<dbReference type="EMBL" id="BC100949">
    <property type="protein sequence ID" value="AAI00950.1"/>
    <property type="molecule type" value="mRNA"/>
</dbReference>
<dbReference type="CCDS" id="CCDS8969.1">
    <molecule id="Q86WH2-1"/>
</dbReference>
<dbReference type="RefSeq" id="NP_835463.1">
    <molecule id="Q86WH2-1"/>
    <property type="nucleotide sequence ID" value="NM_178169.4"/>
</dbReference>
<dbReference type="SMR" id="Q86WH2"/>
<dbReference type="BioGRID" id="129534">
    <property type="interactions" value="38"/>
</dbReference>
<dbReference type="FunCoup" id="Q86WH2">
    <property type="interactions" value="539"/>
</dbReference>
<dbReference type="IntAct" id="Q86WH2">
    <property type="interactions" value="39"/>
</dbReference>
<dbReference type="STRING" id="9606.ENSP00000443021"/>
<dbReference type="GlyGen" id="Q86WH2">
    <property type="glycosylation" value="1 site, 1 O-linked glycan (1 site)"/>
</dbReference>
<dbReference type="iPTMnet" id="Q86WH2"/>
<dbReference type="PhosphoSitePlus" id="Q86WH2"/>
<dbReference type="BioMuta" id="RASSF3"/>
<dbReference type="DMDM" id="74714093"/>
<dbReference type="jPOST" id="Q86WH2"/>
<dbReference type="MassIVE" id="Q86WH2"/>
<dbReference type="PaxDb" id="9606-ENSP00000443021"/>
<dbReference type="PeptideAtlas" id="Q86WH2"/>
<dbReference type="ProteomicsDB" id="70160">
    <molecule id="Q86WH2-1"/>
</dbReference>
<dbReference type="ProteomicsDB" id="70161">
    <molecule id="Q86WH2-2"/>
</dbReference>
<dbReference type="Pumba" id="Q86WH2"/>
<dbReference type="Antibodypedia" id="29184">
    <property type="antibodies" value="185 antibodies from 31 providers"/>
</dbReference>
<dbReference type="DNASU" id="283349"/>
<dbReference type="Ensembl" id="ENST00000283172.8">
    <molecule id="Q86WH2-2"/>
    <property type="protein sequence ID" value="ENSP00000283172.4"/>
    <property type="gene ID" value="ENSG00000153179.14"/>
</dbReference>
<dbReference type="Ensembl" id="ENST00000542104.6">
    <molecule id="Q86WH2-1"/>
    <property type="protein sequence ID" value="ENSP00000443021.1"/>
    <property type="gene ID" value="ENSG00000153179.14"/>
</dbReference>
<dbReference type="GeneID" id="283349"/>
<dbReference type="KEGG" id="hsa:283349"/>
<dbReference type="MANE-Select" id="ENST00000542104.6">
    <property type="protein sequence ID" value="ENSP00000443021.1"/>
    <property type="RefSeq nucleotide sequence ID" value="NM_178169.4"/>
    <property type="RefSeq protein sequence ID" value="NP_835463.1"/>
</dbReference>
<dbReference type="UCSC" id="uc001ssd.3">
    <molecule id="Q86WH2-1"/>
    <property type="organism name" value="human"/>
</dbReference>
<dbReference type="AGR" id="HGNC:14271"/>
<dbReference type="CTD" id="283349"/>
<dbReference type="DisGeNET" id="283349"/>
<dbReference type="GeneCards" id="RASSF3"/>
<dbReference type="HGNC" id="HGNC:14271">
    <property type="gene designation" value="RASSF3"/>
</dbReference>
<dbReference type="HPA" id="ENSG00000153179">
    <property type="expression patterns" value="Tissue enhanced (intestine)"/>
</dbReference>
<dbReference type="MIM" id="607019">
    <property type="type" value="gene"/>
</dbReference>
<dbReference type="neXtProt" id="NX_Q86WH2"/>
<dbReference type="OpenTargets" id="ENSG00000153179"/>
<dbReference type="PharmGKB" id="PA34247"/>
<dbReference type="VEuPathDB" id="HostDB:ENSG00000153179"/>
<dbReference type="eggNOG" id="KOG4239">
    <property type="taxonomic scope" value="Eukaryota"/>
</dbReference>
<dbReference type="GeneTree" id="ENSGT00940000157502"/>
<dbReference type="HOGENOM" id="CLU_2440221_0_0_1"/>
<dbReference type="InParanoid" id="Q86WH2"/>
<dbReference type="OrthoDB" id="74314at2759"/>
<dbReference type="PAN-GO" id="Q86WH2">
    <property type="GO annotations" value="2 GO annotations based on evolutionary models"/>
</dbReference>
<dbReference type="PhylomeDB" id="Q86WH2"/>
<dbReference type="TreeFam" id="TF319243"/>
<dbReference type="PathwayCommons" id="Q86WH2"/>
<dbReference type="SignaLink" id="Q86WH2"/>
<dbReference type="BioGRID-ORCS" id="283349">
    <property type="hits" value="16 hits in 1156 CRISPR screens"/>
</dbReference>
<dbReference type="ChiTaRS" id="RASSF3">
    <property type="organism name" value="human"/>
</dbReference>
<dbReference type="GenomeRNAi" id="283349"/>
<dbReference type="Pharos" id="Q86WH2">
    <property type="development level" value="Tbio"/>
</dbReference>
<dbReference type="PRO" id="PR:Q86WH2"/>
<dbReference type="Proteomes" id="UP000005640">
    <property type="component" value="Chromosome 12"/>
</dbReference>
<dbReference type="RNAct" id="Q86WH2">
    <property type="molecule type" value="protein"/>
</dbReference>
<dbReference type="Bgee" id="ENSG00000153179">
    <property type="expression patterns" value="Expressed in saphenous vein and 196 other cell types or tissues"/>
</dbReference>
<dbReference type="ExpressionAtlas" id="Q86WH2">
    <property type="expression patterns" value="baseline and differential"/>
</dbReference>
<dbReference type="GO" id="GO:0005737">
    <property type="term" value="C:cytoplasm"/>
    <property type="evidence" value="ECO:0000318"/>
    <property type="project" value="GO_Central"/>
</dbReference>
<dbReference type="GO" id="GO:0005829">
    <property type="term" value="C:cytosol"/>
    <property type="evidence" value="ECO:0000314"/>
    <property type="project" value="HPA"/>
</dbReference>
<dbReference type="GO" id="GO:0005874">
    <property type="term" value="C:microtubule"/>
    <property type="evidence" value="ECO:0007669"/>
    <property type="project" value="UniProtKB-KW"/>
</dbReference>
<dbReference type="GO" id="GO:0005886">
    <property type="term" value="C:plasma membrane"/>
    <property type="evidence" value="ECO:0000314"/>
    <property type="project" value="HPA"/>
</dbReference>
<dbReference type="GO" id="GO:0042802">
    <property type="term" value="F:identical protein binding"/>
    <property type="evidence" value="ECO:0000353"/>
    <property type="project" value="IntAct"/>
</dbReference>
<dbReference type="GO" id="GO:0007165">
    <property type="term" value="P:signal transduction"/>
    <property type="evidence" value="ECO:0000318"/>
    <property type="project" value="GO_Central"/>
</dbReference>
<dbReference type="CDD" id="cd17219">
    <property type="entry name" value="RA_RASSF3"/>
    <property type="match status" value="1"/>
</dbReference>
<dbReference type="CDD" id="cd21891">
    <property type="entry name" value="SARAH_RASSF3"/>
    <property type="match status" value="1"/>
</dbReference>
<dbReference type="FunFam" id="3.10.20.90:FF:000224">
    <property type="entry name" value="ras association domain-containing protein 3"/>
    <property type="match status" value="1"/>
</dbReference>
<dbReference type="Gene3D" id="1.20.5.110">
    <property type="match status" value="1"/>
</dbReference>
<dbReference type="Gene3D" id="3.10.20.90">
    <property type="entry name" value="Phosphatidylinositol 3-kinase Catalytic Subunit, Chain A, domain 1"/>
    <property type="match status" value="1"/>
</dbReference>
<dbReference type="InterPro" id="IPR000159">
    <property type="entry name" value="RA_dom"/>
</dbReference>
<dbReference type="InterPro" id="IPR033614">
    <property type="entry name" value="RASSF1-6"/>
</dbReference>
<dbReference type="InterPro" id="IPR011524">
    <property type="entry name" value="SARAH_dom"/>
</dbReference>
<dbReference type="InterPro" id="IPR029071">
    <property type="entry name" value="Ubiquitin-like_domsf"/>
</dbReference>
<dbReference type="PANTHER" id="PTHR22738:SF8">
    <property type="entry name" value="RAS ASSOCIATION DOMAIN-CONTAINING PROTEIN 3"/>
    <property type="match status" value="1"/>
</dbReference>
<dbReference type="PANTHER" id="PTHR22738">
    <property type="entry name" value="RASSF"/>
    <property type="match status" value="1"/>
</dbReference>
<dbReference type="Pfam" id="PF16517">
    <property type="entry name" value="Nore1-SARAH"/>
    <property type="match status" value="1"/>
</dbReference>
<dbReference type="Pfam" id="PF00788">
    <property type="entry name" value="RA"/>
    <property type="match status" value="1"/>
</dbReference>
<dbReference type="SMART" id="SM00314">
    <property type="entry name" value="RA"/>
    <property type="match status" value="1"/>
</dbReference>
<dbReference type="SUPFAM" id="SSF54236">
    <property type="entry name" value="Ubiquitin-like"/>
    <property type="match status" value="1"/>
</dbReference>
<dbReference type="PROSITE" id="PS50200">
    <property type="entry name" value="RA"/>
    <property type="match status" value="1"/>
</dbReference>
<dbReference type="PROSITE" id="PS50951">
    <property type="entry name" value="SARAH"/>
    <property type="match status" value="1"/>
</dbReference>
<sequence>MSSGYSSLEEDAEDFFFTARTSFFRRAPQGKPRSGQQDVEKEKETHSYLSKEEIKEKVHKYNLAVTDKLKMTLNSNGIYTGFIKVQMELCKPPQTSPNSGKLSPSSNGCMNTLHISSTNTVGEVIEALLKKFLVTESPAKFALYKRCHREDQVYACKLSDREHPLYLRLVAGPRTDTLSFVLREHEIGEWEAFSLPELQNFLRILDKEEDEQLQNLKRRYTAYRQKLEEALREVWKPD</sequence>
<keyword id="KW-0007">Acetylation</keyword>
<keyword id="KW-0025">Alternative splicing</keyword>
<keyword id="KW-0963">Cytoplasm</keyword>
<keyword id="KW-0206">Cytoskeleton</keyword>
<keyword id="KW-0493">Microtubule</keyword>
<keyword id="KW-1267">Proteomics identification</keyword>
<keyword id="KW-1185">Reference proteome</keyword>
<protein>
    <recommendedName>
        <fullName>Ras association domain-containing protein 3</fullName>
    </recommendedName>
</protein>
<evidence type="ECO:0000255" key="1">
    <source>
        <dbReference type="PROSITE-ProRule" id="PRU00166"/>
    </source>
</evidence>
<evidence type="ECO:0000255" key="2">
    <source>
        <dbReference type="PROSITE-ProRule" id="PRU00310"/>
    </source>
</evidence>
<evidence type="ECO:0000256" key="3">
    <source>
        <dbReference type="SAM" id="MobiDB-lite"/>
    </source>
</evidence>
<evidence type="ECO:0000269" key="4">
    <source>
    </source>
</evidence>
<evidence type="ECO:0000269" key="5">
    <source>
    </source>
</evidence>
<evidence type="ECO:0000303" key="6">
    <source ref="1"/>
</evidence>
<evidence type="ECO:0000305" key="7"/>
<evidence type="ECO:0007744" key="8">
    <source>
    </source>
</evidence>
<reference key="1">
    <citation type="submission" date="2003-01" db="EMBL/GenBank/DDBJ databases">
        <title>RASSF5 is transcriptionally inactivated by an epigenetic mechanism in ovarian cancers.</title>
        <authorList>
            <person name="Burbee D.G."/>
            <person name="White M.A."/>
            <person name="Miller D.S."/>
            <person name="Minna J.D."/>
            <person name="Muller C.Y."/>
        </authorList>
    </citation>
    <scope>NUCLEOTIDE SEQUENCE [MRNA] (ISOFORMS 1 AND 2)</scope>
</reference>
<reference key="2">
    <citation type="journal article" date="2004" name="Genome Res.">
        <title>The status, quality, and expansion of the NIH full-length cDNA project: the Mammalian Gene Collection (MGC).</title>
        <authorList>
            <consortium name="The MGC Project Team"/>
        </authorList>
    </citation>
    <scope>NUCLEOTIDE SEQUENCE [LARGE SCALE MRNA] (ISOFORM 1)</scope>
</reference>
<reference key="3">
    <citation type="journal article" date="2002" name="Oncogene">
        <title>RASSF3 and NORE1: identification and cloning of two human homologues of the putative tumor suppressor gene RASSF1.</title>
        <authorList>
            <person name="Tommasi S."/>
            <person name="Dammann R."/>
            <person name="Jin S.-G."/>
            <person name="Zhang X.-F."/>
            <person name="Avruch J."/>
            <person name="Pfeifer G.P."/>
        </authorList>
    </citation>
    <scope>TISSUE SPECIFICITY</scope>
    <scope>VARIANT HIS-232</scope>
</reference>
<reference key="4">
    <citation type="journal article" date="2005" name="J. Biol. Chem.">
        <title>Local activation of Rap1 contributes to directional vascular endothelial cell migration accompanied by extension of microtubules on which RAPL, a Rap1-associating molecule, localizes.</title>
        <authorList>
            <person name="Fujita H."/>
            <person name="Fukuhara S."/>
            <person name="Sakurai A."/>
            <person name="Yamagishi A."/>
            <person name="Kamioka Y."/>
            <person name="Nakaoka Y."/>
            <person name="Masuda M."/>
            <person name="Mochizuki N."/>
        </authorList>
    </citation>
    <scope>SUBCELLULAR LOCATION</scope>
</reference>
<reference key="5">
    <citation type="journal article" date="2009" name="Mol. Cell. Proteomics">
        <title>Large-scale proteomics analysis of the human kinome.</title>
        <authorList>
            <person name="Oppermann F.S."/>
            <person name="Gnad F."/>
            <person name="Olsen J.V."/>
            <person name="Hornberger R."/>
            <person name="Greff Z."/>
            <person name="Keri G."/>
            <person name="Mann M."/>
            <person name="Daub H."/>
        </authorList>
    </citation>
    <scope>ACETYLATION [LARGE SCALE ANALYSIS] AT SER-2</scope>
    <scope>CLEAVAGE OF INITIATOR METHIONINE [LARGE SCALE ANALYSIS]</scope>
    <scope>IDENTIFICATION BY MASS SPECTROMETRY [LARGE SCALE ANALYSIS]</scope>
</reference>
<comment type="interaction">
    <interactant intactId="EBI-2845202">
        <id>Q86WH2</id>
    </interactant>
    <interactant intactId="EBI-712912">
        <id>Q9HC52</id>
        <label>CBX8</label>
    </interactant>
    <organismsDiffer>false</organismsDiffer>
    <experiments>3</experiments>
</comment>
<comment type="interaction">
    <interactant intactId="EBI-2845202">
        <id>Q86WH2</id>
    </interactant>
    <interactant intactId="EBI-77321">
        <id>Q9UER7</id>
        <label>DAXX</label>
    </interactant>
    <organismsDiffer>false</organismsDiffer>
    <experiments>3</experiments>
</comment>
<comment type="interaction">
    <interactant intactId="EBI-2845202">
        <id>Q86WH2</id>
    </interactant>
    <interactant intactId="EBI-1752811">
        <id>Q9BQ89</id>
        <label>FAM110A</label>
    </interactant>
    <organismsDiffer>false</organismsDiffer>
    <experiments>3</experiments>
</comment>
<comment type="interaction">
    <interactant intactId="EBI-2845202">
        <id>Q86WH2</id>
    </interactant>
    <interactant intactId="EBI-2556412">
        <id>Q8IWB1</id>
        <label>ITPRIP</label>
    </interactant>
    <organismsDiffer>false</organismsDiffer>
    <experiments>3</experiments>
</comment>
<comment type="interaction">
    <interactant intactId="EBI-2845202">
        <id>Q86WH2</id>
    </interactant>
    <interactant intactId="EBI-710124">
        <id>O60341</id>
        <label>KDM1A</label>
    </interactant>
    <organismsDiffer>false</organismsDiffer>
    <experiments>3</experiments>
</comment>
<comment type="interaction">
    <interactant intactId="EBI-2845202">
        <id>Q86WH2</id>
    </interactant>
    <interactant intactId="EBI-12351611">
        <id>Q16719-2</id>
        <label>KYNU</label>
    </interactant>
    <organismsDiffer>false</organismsDiffer>
    <experiments>3</experiments>
</comment>
<comment type="interaction">
    <interactant intactId="EBI-2845202">
        <id>Q86WH2</id>
    </interactant>
    <interactant intactId="EBI-725647">
        <id>Q99732</id>
        <label>LITAF</label>
    </interactant>
    <organismsDiffer>false</organismsDiffer>
    <experiments>5</experiments>
</comment>
<comment type="interaction">
    <interactant intactId="EBI-2845202">
        <id>Q86WH2</id>
    </interactant>
    <interactant intactId="EBI-295391">
        <id>Q9BYG5</id>
        <label>PARD6B</label>
    </interactant>
    <organismsDiffer>false</organismsDiffer>
    <experiments>3</experiments>
</comment>
<comment type="interaction">
    <interactant intactId="EBI-2845202">
        <id>Q86WH2</id>
    </interactant>
    <interactant intactId="EBI-2845202">
        <id>Q86WH2</id>
        <label>RASSF3</label>
    </interactant>
    <organismsDiffer>false</organismsDiffer>
    <experiments>2</experiments>
</comment>
<comment type="interaction">
    <interactant intactId="EBI-2845202">
        <id>Q86WH2</id>
    </interactant>
    <interactant intactId="EBI-747925">
        <id>Q9NQG5</id>
        <label>RPRD1B</label>
    </interactant>
    <organismsDiffer>false</organismsDiffer>
    <experiments>3</experiments>
</comment>
<comment type="interaction">
    <interactant intactId="EBI-2845202">
        <id>Q86WH2</id>
    </interactant>
    <interactant intactId="EBI-992580">
        <id>Q13188</id>
        <label>STK3</label>
    </interactant>
    <organismsDiffer>false</organismsDiffer>
    <experiments>7</experiments>
</comment>
<comment type="interaction">
    <interactant intactId="EBI-2845202">
        <id>Q86WH2</id>
    </interactant>
    <interactant intactId="EBI-367376">
        <id>Q13043</id>
        <label>STK4</label>
    </interactant>
    <organismsDiffer>false</organismsDiffer>
    <experiments>7</experiments>
</comment>
<comment type="interaction">
    <interactant intactId="EBI-2845202">
        <id>Q86WH2</id>
    </interactant>
    <interactant intactId="EBI-744726">
        <id>Q8NEK8</id>
        <label>TENT5D</label>
    </interactant>
    <organismsDiffer>false</organismsDiffer>
    <experiments>3</experiments>
</comment>
<comment type="interaction">
    <interactant intactId="EBI-2845202">
        <id>Q86WH2</id>
    </interactant>
    <interactant intactId="EBI-355727">
        <id>P02786</id>
        <label>TFRC</label>
    </interactant>
    <organismsDiffer>false</organismsDiffer>
    <experiments>3</experiments>
</comment>
<comment type="interaction">
    <interactant intactId="EBI-2845202">
        <id>Q86WH2</id>
    </interactant>
    <interactant intactId="EBI-10262539">
        <id>Q8IWR1</id>
        <label>TRIM59</label>
    </interactant>
    <organismsDiffer>false</organismsDiffer>
    <experiments>3</experiments>
</comment>
<comment type="interaction">
    <interactant intactId="EBI-2845202">
        <id>Q86WH2</id>
    </interactant>
    <interactant intactId="EBI-11741890">
        <id>Q86VK4-3</id>
        <label>ZNF410</label>
    </interactant>
    <organismsDiffer>false</organismsDiffer>
    <experiments>3</experiments>
</comment>
<comment type="subcellular location">
    <subcellularLocation>
        <location evidence="5">Cytoplasm</location>
    </subcellularLocation>
    <subcellularLocation>
        <location evidence="5">Cytoplasm</location>
        <location evidence="5">Cytoskeleton</location>
    </subcellularLocation>
    <text>Localized to microtubules in vascular endothelial cells.</text>
</comment>
<comment type="alternative products">
    <event type="alternative splicing"/>
    <isoform>
        <id>Q86WH2-1</id>
        <name>1</name>
        <name>A</name>
        <sequence type="displayed"/>
    </isoform>
    <isoform>
        <id>Q86WH2-2</id>
        <name>2</name>
        <name>B</name>
        <sequence type="described" ref="VSP_019353 VSP_019354"/>
    </isoform>
</comment>
<comment type="tissue specificity">
    <text evidence="4">Widely expressed.</text>
</comment>
<comment type="caution">
    <text evidence="7">Was termed (Ref.1) RASSF5.</text>
</comment>